<gene>
    <name type="primary">slc9b2</name>
    <name type="synonym">nha2</name>
    <name type="synonym">nhedc2</name>
</gene>
<sequence>MEDSLFSVDKAGPGKDASAASADCNHMVAEDGIITEQHKEIPLVALKVPDGHAPIDECELLNSDDQLPKGSQNQTNICMRIRAFACPPQGCFSLAITNVTMVILIWAVVWSITGPECLPGGNLFGILALLFSAALGGKLISLIKIPSLPPLPPLLGMLLAGFLIRNIPVITDQVQIHHKWSAALRNIALAIILVRAGLGLDPKALRKLKAVCLRLSFGPCVVESCTAAVVSHFIMGFPLTWGFMLGFVLGAVSPAVVVPSMLILQKEGFGVDKGIPTLLMAAGSFDDVLAITGFNTCLGMAFSSGSTLNTIVRGVLEVVVGIAAGLLFGFFLHYFPSKDQENLKGKRSYLILALSVFAVFGSLYFGFPGSGGLCTLVMAFLAGIGWSTDKTVVEDIIAVSWDIFQPLLFGLIGAEISVASLKPETVGLCTATLIIALIIRICISFLMVCFSGFSLKEKIFISLAWMPKATVQAAIGSVALDTARTLENKQFEDYGMDVLTVAFLGILVTAPIGALVIGLTGPKMLEKSESRTVTEEGSV</sequence>
<dbReference type="EMBL" id="BC135456">
    <property type="protein sequence ID" value="AAI35457.1"/>
    <property type="molecule type" value="mRNA"/>
</dbReference>
<dbReference type="RefSeq" id="NP_001093729.1">
    <property type="nucleotide sequence ID" value="NM_001100259.1"/>
</dbReference>
<dbReference type="SMR" id="A4IHB9"/>
<dbReference type="FunCoup" id="A4IHB9">
    <property type="interactions" value="10"/>
</dbReference>
<dbReference type="STRING" id="8364.ENSXETP00000022480"/>
<dbReference type="PaxDb" id="8364-ENSXETP00000046115"/>
<dbReference type="GeneID" id="100101762"/>
<dbReference type="KEGG" id="xtr:100101762"/>
<dbReference type="AGR" id="Xenbase:XB-GENE-478907"/>
<dbReference type="CTD" id="133308"/>
<dbReference type="Xenbase" id="XB-GENE-478907">
    <property type="gene designation" value="slc9b2"/>
</dbReference>
<dbReference type="eggNOG" id="KOG3826">
    <property type="taxonomic scope" value="Eukaryota"/>
</dbReference>
<dbReference type="InParanoid" id="A4IHB9"/>
<dbReference type="OMA" id="WAIPTFA"/>
<dbReference type="OrthoDB" id="423807at2759"/>
<dbReference type="Reactome" id="R-XTR-2672351">
    <property type="pathway name" value="Stimuli-sensing channels"/>
</dbReference>
<dbReference type="Proteomes" id="UP000008143">
    <property type="component" value="Chromosome 1"/>
</dbReference>
<dbReference type="GO" id="GO:0016324">
    <property type="term" value="C:apical plasma membrane"/>
    <property type="evidence" value="ECO:0007669"/>
    <property type="project" value="UniProtKB-SubCell"/>
</dbReference>
<dbReference type="GO" id="GO:0016323">
    <property type="term" value="C:basolateral plasma membrane"/>
    <property type="evidence" value="ECO:0007669"/>
    <property type="project" value="UniProtKB-SubCell"/>
</dbReference>
<dbReference type="GO" id="GO:0031966">
    <property type="term" value="C:mitochondrial membrane"/>
    <property type="evidence" value="ECO:0007669"/>
    <property type="project" value="UniProtKB-SubCell"/>
</dbReference>
<dbReference type="GO" id="GO:0055037">
    <property type="term" value="C:recycling endosome"/>
    <property type="evidence" value="ECO:0000250"/>
    <property type="project" value="UniProtKB"/>
</dbReference>
<dbReference type="GO" id="GO:0055038">
    <property type="term" value="C:recycling endosome membrane"/>
    <property type="evidence" value="ECO:0007669"/>
    <property type="project" value="UniProtKB-SubCell"/>
</dbReference>
<dbReference type="GO" id="GO:0030672">
    <property type="term" value="C:synaptic vesicle membrane"/>
    <property type="evidence" value="ECO:0007669"/>
    <property type="project" value="UniProtKB-SubCell"/>
</dbReference>
<dbReference type="GO" id="GO:0015297">
    <property type="term" value="F:antiporter activity"/>
    <property type="evidence" value="ECO:0007669"/>
    <property type="project" value="UniProtKB-KW"/>
</dbReference>
<dbReference type="GO" id="GO:0046872">
    <property type="term" value="F:metal ion binding"/>
    <property type="evidence" value="ECO:0007669"/>
    <property type="project" value="UniProtKB-KW"/>
</dbReference>
<dbReference type="GO" id="GO:1902600">
    <property type="term" value="P:proton transmembrane transport"/>
    <property type="evidence" value="ECO:0007669"/>
    <property type="project" value="UniProtKB-KW"/>
</dbReference>
<dbReference type="GO" id="GO:0055078">
    <property type="term" value="P:sodium ion homeostasis"/>
    <property type="evidence" value="ECO:0000250"/>
    <property type="project" value="UniProtKB"/>
</dbReference>
<dbReference type="GO" id="GO:0006814">
    <property type="term" value="P:sodium ion transport"/>
    <property type="evidence" value="ECO:0007669"/>
    <property type="project" value="UniProtKB-KW"/>
</dbReference>
<dbReference type="FunFam" id="1.20.1530.20:FF:000012">
    <property type="entry name" value="sodium/hydrogen exchanger 9B2 isoform X1"/>
    <property type="match status" value="1"/>
</dbReference>
<dbReference type="Gene3D" id="1.20.1530.20">
    <property type="match status" value="1"/>
</dbReference>
<dbReference type="InterPro" id="IPR006153">
    <property type="entry name" value="Cation/H_exchanger_TM"/>
</dbReference>
<dbReference type="InterPro" id="IPR051843">
    <property type="entry name" value="CPA1_transporter"/>
</dbReference>
<dbReference type="InterPro" id="IPR038770">
    <property type="entry name" value="Na+/solute_symporter_sf"/>
</dbReference>
<dbReference type="PANTHER" id="PTHR31102">
    <property type="match status" value="1"/>
</dbReference>
<dbReference type="PANTHER" id="PTHR31102:SF1">
    <property type="entry name" value="CATION_H+ EXCHANGER DOMAIN-CONTAINING PROTEIN"/>
    <property type="match status" value="1"/>
</dbReference>
<dbReference type="Pfam" id="PF00999">
    <property type="entry name" value="Na_H_Exchanger"/>
    <property type="match status" value="1"/>
</dbReference>
<feature type="chain" id="PRO_0000331273" description="Sodium/hydrogen exchanger 9B2">
    <location>
        <begin position="1"/>
        <end position="539"/>
    </location>
</feature>
<feature type="topological domain" description="Cytoplasmic" evidence="4">
    <location>
        <begin position="1"/>
        <end position="94"/>
    </location>
</feature>
<feature type="transmembrane region" description="Helical; Name=1" evidence="1">
    <location>
        <begin position="95"/>
        <end position="112"/>
    </location>
</feature>
<feature type="topological domain" description="Extracellular" evidence="4">
    <location>
        <begin position="113"/>
        <end position="121"/>
    </location>
</feature>
<feature type="transmembrane region" description="Helical; Name=2" evidence="1">
    <location>
        <begin position="122"/>
        <end position="141"/>
    </location>
</feature>
<feature type="topological domain" description="Cytoplasmic" evidence="4">
    <location>
        <begin position="142"/>
        <end position="152"/>
    </location>
</feature>
<feature type="transmembrane region" description="Helical; Name=3" evidence="1">
    <location>
        <begin position="153"/>
        <end position="169"/>
    </location>
</feature>
<feature type="topological domain" description="Extracellular" evidence="4">
    <location>
        <begin position="170"/>
        <end position="179"/>
    </location>
</feature>
<feature type="transmembrane region" description="Helical; Name=4" evidence="1">
    <location>
        <begin position="180"/>
        <end position="197"/>
    </location>
</feature>
<feature type="topological domain" description="Cytoplasmic" evidence="4">
    <location>
        <begin position="198"/>
        <end position="208"/>
    </location>
</feature>
<feature type="transmembrane region" description="Helical; Name=5" evidence="1">
    <location>
        <begin position="209"/>
        <end position="235"/>
    </location>
</feature>
<feature type="topological domain" description="Extracellular" evidence="4">
    <location>
        <begin position="236"/>
        <end position="241"/>
    </location>
</feature>
<feature type="transmembrane region" description="Helical; Name=6" evidence="1">
    <location>
        <begin position="242"/>
        <end position="250"/>
    </location>
</feature>
<feature type="topological domain" description="Cytoplasmic" evidence="4">
    <location>
        <begin position="251"/>
        <end position="278"/>
    </location>
</feature>
<feature type="transmembrane region" description="Helical; Name=7" evidence="1">
    <location>
        <begin position="279"/>
        <end position="298"/>
    </location>
</feature>
<feature type="topological domain" description="Extracellular" evidence="4">
    <location>
        <begin position="299"/>
        <end position="308"/>
    </location>
</feature>
<feature type="transmembrane region" description="Helical; Name=8" evidence="1">
    <location>
        <begin position="309"/>
        <end position="332"/>
    </location>
</feature>
<feature type="topological domain" description="Cytoplasmic" evidence="4">
    <location>
        <begin position="333"/>
        <end position="347"/>
    </location>
</feature>
<feature type="transmembrane region" description="Helical; Name=9" evidence="1">
    <location>
        <begin position="348"/>
        <end position="365"/>
    </location>
</feature>
<feature type="topological domain" description="Extracellular" evidence="4">
    <location>
        <begin position="366"/>
        <end position="369"/>
    </location>
</feature>
<feature type="transmembrane region" description="Helical; Name=10" evidence="1">
    <location>
        <begin position="370"/>
        <end position="381"/>
    </location>
</feature>
<feature type="topological domain" description="Cytoplasmic" evidence="4">
    <location>
        <begin position="382"/>
        <end position="398"/>
    </location>
</feature>
<feature type="transmembrane region" description="Helical; Name=11" evidence="1">
    <location>
        <begin position="399"/>
        <end position="419"/>
    </location>
</feature>
<feature type="topological domain" description="Extracellular" evidence="4">
    <location>
        <begin position="420"/>
        <end position="425"/>
    </location>
</feature>
<feature type="transmembrane region" description="Helical; Name=12" evidence="1">
    <location>
        <begin position="426"/>
        <end position="448"/>
    </location>
</feature>
<feature type="topological domain" description="Cytoplasmic" evidence="4">
    <location>
        <begin position="449"/>
        <end position="469"/>
    </location>
</feature>
<feature type="transmembrane region" description="Helical; Name=13" evidence="1">
    <location>
        <begin position="470"/>
        <end position="481"/>
    </location>
</feature>
<feature type="topological domain" description="Extracellular" evidence="4">
    <location>
        <begin position="482"/>
        <end position="494"/>
    </location>
</feature>
<feature type="transmembrane region" description="Helical; Name=14" evidence="1">
    <location>
        <begin position="495"/>
        <end position="517"/>
    </location>
</feature>
<feature type="topological domain" description="Cytoplasmic" evidence="4">
    <location>
        <begin position="518"/>
        <end position="539"/>
    </location>
</feature>
<feature type="binding site" evidence="3">
    <location>
        <position position="252"/>
    </location>
    <ligand>
        <name>Na(+)</name>
        <dbReference type="ChEBI" id="CHEBI:29101"/>
    </ligand>
</feature>
<feature type="binding site" evidence="3">
    <location>
        <position position="283"/>
    </location>
    <ligand>
        <name>Na(+)</name>
        <dbReference type="ChEBI" id="CHEBI:29101"/>
    </ligand>
</feature>
<feature type="binding site" evidence="3">
    <location>
        <position position="286"/>
    </location>
    <ligand>
        <name>Na(+)</name>
        <dbReference type="ChEBI" id="CHEBI:29101"/>
    </ligand>
</feature>
<feature type="binding site" evidence="3">
    <location>
        <position position="287"/>
    </location>
    <ligand>
        <name>Na(+)</name>
        <dbReference type="ChEBI" id="CHEBI:29101"/>
    </ligand>
</feature>
<accession>A4IHB9</accession>
<comment type="function">
    <text evidence="2 3">Electroneutral Na(+) Li(+)/H(+) antiporter that extrudes Na(+) or Li(+) in exchange for external protons across the membrane (By similarity). Uses the proton gradient/membrane potential to extrude sodium (By similarity). Contributes to the regulation of intracellular pH and sodium homeostasis (By similarity). Also able to mediate Na(+)/Li(+) antiporter activity in kidney (By similarity).</text>
</comment>
<comment type="catalytic activity">
    <reaction evidence="3">
        <text>Li(+)(out) + H(+)(in) = Li(+)(in) + H(+)(out)</text>
        <dbReference type="Rhea" id="RHEA:72407"/>
        <dbReference type="ChEBI" id="CHEBI:15378"/>
        <dbReference type="ChEBI" id="CHEBI:49713"/>
    </reaction>
</comment>
<comment type="catalytic activity">
    <reaction evidence="3">
        <text>Li(+)(in) + Na(+)(out) = Li(+)(out) + Na(+)(in)</text>
        <dbReference type="Rhea" id="RHEA:72415"/>
        <dbReference type="ChEBI" id="CHEBI:29101"/>
        <dbReference type="ChEBI" id="CHEBI:49713"/>
    </reaction>
</comment>
<comment type="catalytic activity">
    <reaction evidence="3">
        <text>Na(+)(in) + H(+)(out) = Na(+)(out) + H(+)(in)</text>
        <dbReference type="Rhea" id="RHEA:29419"/>
        <dbReference type="ChEBI" id="CHEBI:15378"/>
        <dbReference type="ChEBI" id="CHEBI:29101"/>
    </reaction>
</comment>
<comment type="activity regulation">
    <text evidence="3">Allosterically inhibited by the N-terminal domain. Inhibited by phloretin.</text>
</comment>
<comment type="subunit">
    <text evidence="1">Homodimer; dimerization is essential for SLC9B2 activity. Lipids seem to play a role in the stabilization of the dimerization subdomain.</text>
</comment>
<comment type="subcellular location">
    <subcellularLocation>
        <location evidence="2">Cell membrane</location>
        <topology evidence="1">Multi-pass membrane protein</topology>
    </subcellularLocation>
    <subcellularLocation>
        <location evidence="2">Mitochondrion membrane</location>
        <topology evidence="1">Multi-pass membrane protein</topology>
    </subcellularLocation>
    <subcellularLocation>
        <location evidence="2">Endosome membrane</location>
        <topology evidence="1">Multi-pass membrane protein</topology>
    </subcellularLocation>
    <subcellularLocation>
        <location evidence="2">Recycling endosome membrane</location>
        <topology evidence="1">Multi-pass membrane protein</topology>
    </subcellularLocation>
    <subcellularLocation>
        <location evidence="2">Cytoplasmic vesicle</location>
        <location evidence="2">Secretory vesicle</location>
        <location evidence="2">Synaptic vesicle membrane</location>
        <topology evidence="1">Multi-pass membrane protein</topology>
    </subcellularLocation>
    <subcellularLocation>
        <location evidence="2">Basolateral cell membrane</location>
        <topology evidence="1">Multi-pass membrane protein</topology>
    </subcellularLocation>
    <subcellularLocation>
        <location evidence="2">Apical cell membrane</location>
        <topology evidence="1">Multi-pass membrane protein</topology>
    </subcellularLocation>
</comment>
<comment type="miscellaneous">
    <text evidence="2">The subcellular localization of SLC9B2 remains controversial. Was initially thought to partially localize to mitochondria. However SLC9B2 does not seem to contain a mitochondrial targeting sequence. It was later established that its localizes predominantly in plasma membrane or intracellularly to endosomes and lysosomes (By similarity). In another recent study, endogenous SLC9B2 in the distal tubular cell line mpkDCT4 is detected in recycling endosomes but absent in plasma membrane (By similarity).</text>
</comment>
<comment type="similarity">
    <text evidence="4">Belongs to the monovalent cation:proton antiporter 1 (CPA1) transporter (TC 2.A.36) family.</text>
</comment>
<protein>
    <recommendedName>
        <fullName>Sodium/hydrogen exchanger 9B2</fullName>
    </recommendedName>
    <alternativeName>
        <fullName>Na(+)/H(+) exchanger NHA2</fullName>
    </alternativeName>
    <alternativeName>
        <fullName>Na(+)/H(+) exchanger-like domain-containing protein 2</fullName>
        <shortName>NHE domain-containing protein 2</shortName>
    </alternativeName>
    <alternativeName>
        <fullName>Sodium/hydrogen exchanger-like domain-containing protein 2</fullName>
    </alternativeName>
    <alternativeName>
        <fullName>Solute carrier family 9 subfamily B member 2</fullName>
    </alternativeName>
</protein>
<evidence type="ECO:0000250" key="1">
    <source>
        <dbReference type="UniProtKB" id="A0A6P3HVI0"/>
    </source>
</evidence>
<evidence type="ECO:0000250" key="2">
    <source>
        <dbReference type="UniProtKB" id="Q5BKR2"/>
    </source>
</evidence>
<evidence type="ECO:0000250" key="3">
    <source>
        <dbReference type="UniProtKB" id="Q86UD5"/>
    </source>
</evidence>
<evidence type="ECO:0000305" key="4"/>
<proteinExistence type="evidence at transcript level"/>
<name>SL9B2_XENTR</name>
<organism>
    <name type="scientific">Xenopus tropicalis</name>
    <name type="common">Western clawed frog</name>
    <name type="synonym">Silurana tropicalis</name>
    <dbReference type="NCBI Taxonomy" id="8364"/>
    <lineage>
        <taxon>Eukaryota</taxon>
        <taxon>Metazoa</taxon>
        <taxon>Chordata</taxon>
        <taxon>Craniata</taxon>
        <taxon>Vertebrata</taxon>
        <taxon>Euteleostomi</taxon>
        <taxon>Amphibia</taxon>
        <taxon>Batrachia</taxon>
        <taxon>Anura</taxon>
        <taxon>Pipoidea</taxon>
        <taxon>Pipidae</taxon>
        <taxon>Xenopodinae</taxon>
        <taxon>Xenopus</taxon>
        <taxon>Silurana</taxon>
    </lineage>
</organism>
<keyword id="KW-0050">Antiport</keyword>
<keyword id="KW-1003">Cell membrane</keyword>
<keyword id="KW-0968">Cytoplasmic vesicle</keyword>
<keyword id="KW-0967">Endosome</keyword>
<keyword id="KW-0375">Hydrogen ion transport</keyword>
<keyword id="KW-0406">Ion transport</keyword>
<keyword id="KW-0472">Membrane</keyword>
<keyword id="KW-0479">Metal-binding</keyword>
<keyword id="KW-0496">Mitochondrion</keyword>
<keyword id="KW-1185">Reference proteome</keyword>
<keyword id="KW-0915">Sodium</keyword>
<keyword id="KW-0739">Sodium transport</keyword>
<keyword id="KW-0770">Synapse</keyword>
<keyword id="KW-0812">Transmembrane</keyword>
<keyword id="KW-1133">Transmembrane helix</keyword>
<keyword id="KW-0813">Transport</keyword>
<reference key="1">
    <citation type="submission" date="2007-03" db="EMBL/GenBank/DDBJ databases">
        <authorList>
            <consortium name="NIH - Xenopus Gene Collection (XGC) project"/>
        </authorList>
    </citation>
    <scope>NUCLEOTIDE SEQUENCE [LARGE SCALE MRNA]</scope>
    <source>
        <tissue>Embryo</tissue>
    </source>
</reference>